<comment type="similarity">
    <text evidence="1">Belongs to the UPF0102 family.</text>
</comment>
<evidence type="ECO:0000305" key="1"/>
<name>Y2381_LEPIN</name>
<gene>
    <name type="ordered locus">LA_2381</name>
</gene>
<organism>
    <name type="scientific">Leptospira interrogans serogroup Icterohaemorrhagiae serovar Lai (strain 56601)</name>
    <dbReference type="NCBI Taxonomy" id="189518"/>
    <lineage>
        <taxon>Bacteria</taxon>
        <taxon>Pseudomonadati</taxon>
        <taxon>Spirochaetota</taxon>
        <taxon>Spirochaetia</taxon>
        <taxon>Leptospirales</taxon>
        <taxon>Leptospiraceae</taxon>
        <taxon>Leptospira</taxon>
    </lineage>
</organism>
<proteinExistence type="inferred from homology"/>
<feature type="chain" id="PRO_0000167360" description="UPF0102 protein LA_2381">
    <location>
        <begin position="1"/>
        <end position="116"/>
    </location>
</feature>
<accession>Q8F3M0</accession>
<reference key="1">
    <citation type="journal article" date="2003" name="Nature">
        <title>Unique physiological and pathogenic features of Leptospira interrogans revealed by whole-genome sequencing.</title>
        <authorList>
            <person name="Ren S.-X."/>
            <person name="Fu G."/>
            <person name="Jiang X.-G."/>
            <person name="Zeng R."/>
            <person name="Miao Y.-G."/>
            <person name="Xu H."/>
            <person name="Zhang Y.-X."/>
            <person name="Xiong H."/>
            <person name="Lu G."/>
            <person name="Lu L.-F."/>
            <person name="Jiang H.-Q."/>
            <person name="Jia J."/>
            <person name="Tu Y.-F."/>
            <person name="Jiang J.-X."/>
            <person name="Gu W.-Y."/>
            <person name="Zhang Y.-Q."/>
            <person name="Cai Z."/>
            <person name="Sheng H.-H."/>
            <person name="Yin H.-F."/>
            <person name="Zhang Y."/>
            <person name="Zhu G.-F."/>
            <person name="Wan M."/>
            <person name="Huang H.-L."/>
            <person name="Qian Z."/>
            <person name="Wang S.-Y."/>
            <person name="Ma W."/>
            <person name="Yao Z.-J."/>
            <person name="Shen Y."/>
            <person name="Qiang B.-Q."/>
            <person name="Xia Q.-C."/>
            <person name="Guo X.-K."/>
            <person name="Danchin A."/>
            <person name="Saint Girons I."/>
            <person name="Somerville R.L."/>
            <person name="Wen Y.-M."/>
            <person name="Shi M.-H."/>
            <person name="Chen Z."/>
            <person name="Xu J.-G."/>
            <person name="Zhao G.-P."/>
        </authorList>
    </citation>
    <scope>NUCLEOTIDE SEQUENCE [LARGE SCALE GENOMIC DNA]</scope>
    <source>
        <strain>56601</strain>
    </source>
</reference>
<keyword id="KW-1185">Reference proteome</keyword>
<protein>
    <recommendedName>
        <fullName>UPF0102 protein LA_2381</fullName>
    </recommendedName>
</protein>
<dbReference type="EMBL" id="AE010300">
    <property type="protein sequence ID" value="AAN49580.1"/>
    <property type="molecule type" value="Genomic_DNA"/>
</dbReference>
<dbReference type="RefSeq" id="NP_712562.1">
    <property type="nucleotide sequence ID" value="NC_004342.2"/>
</dbReference>
<dbReference type="RefSeq" id="WP_000040212.1">
    <property type="nucleotide sequence ID" value="NC_004342.2"/>
</dbReference>
<dbReference type="SMR" id="Q8F3M0"/>
<dbReference type="STRING" id="189518.LA_2381"/>
<dbReference type="PaxDb" id="189518-LA_2381"/>
<dbReference type="EnsemblBacteria" id="AAN49580">
    <property type="protein sequence ID" value="AAN49580"/>
    <property type="gene ID" value="LA_2381"/>
</dbReference>
<dbReference type="KEGG" id="lil:LA_2381"/>
<dbReference type="PATRIC" id="fig|189518.3.peg.2362"/>
<dbReference type="HOGENOM" id="CLU_115353_3_1_12"/>
<dbReference type="InParanoid" id="Q8F3M0"/>
<dbReference type="OrthoDB" id="9802516at2"/>
<dbReference type="Proteomes" id="UP000001408">
    <property type="component" value="Chromosome I"/>
</dbReference>
<dbReference type="GO" id="GO:0003676">
    <property type="term" value="F:nucleic acid binding"/>
    <property type="evidence" value="ECO:0007669"/>
    <property type="project" value="InterPro"/>
</dbReference>
<dbReference type="Gene3D" id="3.40.1350.10">
    <property type="match status" value="1"/>
</dbReference>
<dbReference type="HAMAP" id="MF_00048">
    <property type="entry name" value="UPF0102"/>
    <property type="match status" value="1"/>
</dbReference>
<dbReference type="InterPro" id="IPR011335">
    <property type="entry name" value="Restrct_endonuc-II-like"/>
</dbReference>
<dbReference type="InterPro" id="IPR011856">
    <property type="entry name" value="tRNA_endonuc-like_dom_sf"/>
</dbReference>
<dbReference type="InterPro" id="IPR003509">
    <property type="entry name" value="UPF0102_YraN-like"/>
</dbReference>
<dbReference type="NCBIfam" id="NF009157">
    <property type="entry name" value="PRK12497.4-3"/>
    <property type="match status" value="1"/>
</dbReference>
<dbReference type="PANTHER" id="PTHR34039">
    <property type="entry name" value="UPF0102 PROTEIN YRAN"/>
    <property type="match status" value="1"/>
</dbReference>
<dbReference type="PANTHER" id="PTHR34039:SF1">
    <property type="entry name" value="UPF0102 PROTEIN YRAN"/>
    <property type="match status" value="1"/>
</dbReference>
<dbReference type="Pfam" id="PF02021">
    <property type="entry name" value="UPF0102"/>
    <property type="match status" value="1"/>
</dbReference>
<dbReference type="SUPFAM" id="SSF52980">
    <property type="entry name" value="Restriction endonuclease-like"/>
    <property type="match status" value="1"/>
</dbReference>
<sequence length="116" mass="13838">MSKLKKRKGDEGESIASNFLISLDHEILKRNYRFLHCEIDIISVKEEVLYFSEVKFWKEFKFFDPRFTFNLAKQTKMRKAAKGFLAENLSFQNHFVSFCLVSVNEKKGCKYYLDLF</sequence>